<organism>
    <name type="scientific">Sulfolobus acidocaldarius (strain ATCC 33909 / DSM 639 / JCM 8929 / NBRC 15157 / NCIMB 11770)</name>
    <dbReference type="NCBI Taxonomy" id="330779"/>
    <lineage>
        <taxon>Archaea</taxon>
        <taxon>Thermoproteota</taxon>
        <taxon>Thermoprotei</taxon>
        <taxon>Sulfolobales</taxon>
        <taxon>Sulfolobaceae</taxon>
        <taxon>Sulfolobus</taxon>
    </lineage>
</organism>
<protein>
    <recommendedName>
        <fullName>tRNA (cytidine(56)-2'-O)-methyltransferase</fullName>
        <ecNumber>2.1.1.206</ecNumber>
    </recommendedName>
    <alternativeName>
        <fullName>tRNA ribose 2'-O-methyltransferase aTrm56</fullName>
    </alternativeName>
</protein>
<gene>
    <name type="ordered locus">Saci_0653</name>
</gene>
<dbReference type="EC" id="2.1.1.206"/>
<dbReference type="EMBL" id="AY229998">
    <property type="protein sequence ID" value="AAO73478.1"/>
    <property type="molecule type" value="Genomic_DNA"/>
</dbReference>
<dbReference type="EMBL" id="CP000077">
    <property type="protein sequence ID" value="AAY80037.1"/>
    <property type="molecule type" value="Genomic_DNA"/>
</dbReference>
<dbReference type="RefSeq" id="WP_011277539.1">
    <property type="nucleotide sequence ID" value="NC_007181.1"/>
</dbReference>
<dbReference type="SMR" id="Q877H6"/>
<dbReference type="STRING" id="330779.Saci_0653"/>
<dbReference type="GeneID" id="14551172"/>
<dbReference type="KEGG" id="sai:Saci_0653"/>
<dbReference type="PATRIC" id="fig|330779.12.peg.624"/>
<dbReference type="eggNOG" id="arCOG01857">
    <property type="taxonomic scope" value="Archaea"/>
</dbReference>
<dbReference type="HOGENOM" id="CLU_123709_0_0_2"/>
<dbReference type="Proteomes" id="UP000001018">
    <property type="component" value="Chromosome"/>
</dbReference>
<dbReference type="GO" id="GO:0005737">
    <property type="term" value="C:cytoplasm"/>
    <property type="evidence" value="ECO:0007669"/>
    <property type="project" value="UniProtKB-SubCell"/>
</dbReference>
<dbReference type="GO" id="GO:0106059">
    <property type="term" value="F:tRNA (cytidine(56)-2'-O)-methyltransferase activity"/>
    <property type="evidence" value="ECO:0007669"/>
    <property type="project" value="UniProtKB-EC"/>
</dbReference>
<dbReference type="GO" id="GO:0002128">
    <property type="term" value="P:tRNA nucleoside ribose methylation"/>
    <property type="evidence" value="ECO:0007669"/>
    <property type="project" value="InterPro"/>
</dbReference>
<dbReference type="Gene3D" id="3.40.1280.10">
    <property type="match status" value="1"/>
</dbReference>
<dbReference type="InterPro" id="IPR029028">
    <property type="entry name" value="Alpha/beta_knot_MTases"/>
</dbReference>
<dbReference type="InterPro" id="IPR029026">
    <property type="entry name" value="tRNA_m1G_MTases_N"/>
</dbReference>
<dbReference type="InterPro" id="IPR002845">
    <property type="entry name" value="tRNA_mtfrase_aTrm56"/>
</dbReference>
<dbReference type="PANTHER" id="PTHR42197">
    <property type="entry name" value="TRNA (CYTIDINE(56)-2'-O)-METHYLTRANSFERASE"/>
    <property type="match status" value="1"/>
</dbReference>
<dbReference type="PANTHER" id="PTHR42197:SF1">
    <property type="entry name" value="TRNA (CYTIDINE(56)-2'-O)-METHYLTRANSFERASE"/>
    <property type="match status" value="1"/>
</dbReference>
<dbReference type="Pfam" id="PF01994">
    <property type="entry name" value="Trm56"/>
    <property type="match status" value="1"/>
</dbReference>
<dbReference type="SUPFAM" id="SSF75217">
    <property type="entry name" value="alpha/beta knot"/>
    <property type="match status" value="1"/>
</dbReference>
<evidence type="ECO:0000250" key="1"/>
<evidence type="ECO:0000305" key="2"/>
<feature type="chain" id="PRO_0000365320" description="tRNA (cytidine(56)-2'-O)-methyltransferase">
    <location>
        <begin position="1"/>
        <end position="132"/>
    </location>
</feature>
<feature type="binding site" evidence="1">
    <location>
        <position position="35"/>
    </location>
    <ligand>
        <name>S-adenosyl-L-methionine</name>
        <dbReference type="ChEBI" id="CHEBI:59789"/>
    </ligand>
</feature>
<feature type="binding site" evidence="1">
    <location>
        <begin position="65"/>
        <end position="69"/>
    </location>
    <ligand>
        <name>S-adenosyl-L-methionine</name>
        <dbReference type="ChEBI" id="CHEBI:59789"/>
    </ligand>
</feature>
<feature type="binding site" evidence="1">
    <location>
        <begin position="83"/>
        <end position="90"/>
    </location>
    <ligand>
        <name>S-adenosyl-L-methionine</name>
        <dbReference type="ChEBI" id="CHEBI:59789"/>
    </ligand>
</feature>
<sequence>MEVWGGKSYFKVEFVDNPKKIVKSWREKGGLVVHLTMYGKMIDDMIDEITKASKNFTLPLLVVIGSEKVEGWYYYNSDYNIGIGNQPHSEVSALAIFLDRIYKGEELYIHFSDAKFYIIPQLKGKRVVKTDK</sequence>
<name>TRM56_SULAC</name>
<accession>Q877H6</accession>
<accession>Q4JAZ2</accession>
<reference key="1">
    <citation type="submission" date="2003-02" db="EMBL/GenBank/DDBJ databases">
        <title>AAA family ATPase in the archeae Sulfolobus acidocaldarius.</title>
        <authorList>
            <person name="Esnault C."/>
            <person name="Duguet M."/>
        </authorList>
    </citation>
    <scope>NUCLEOTIDE SEQUENCE [GENOMIC DNA]</scope>
    <source>
        <strain>ATCC 33909 / DSM 639 / JCM 8929 / NBRC 15157 / NCIMB 11770</strain>
    </source>
</reference>
<reference key="2">
    <citation type="journal article" date="2005" name="J. Bacteriol.">
        <title>The genome of Sulfolobus acidocaldarius, a model organism of the Crenarchaeota.</title>
        <authorList>
            <person name="Chen L."/>
            <person name="Bruegger K."/>
            <person name="Skovgaard M."/>
            <person name="Redder P."/>
            <person name="She Q."/>
            <person name="Torarinsson E."/>
            <person name="Greve B."/>
            <person name="Awayez M."/>
            <person name="Zibat A."/>
            <person name="Klenk H.-P."/>
            <person name="Garrett R.A."/>
        </authorList>
    </citation>
    <scope>NUCLEOTIDE SEQUENCE [LARGE SCALE GENOMIC DNA]</scope>
    <source>
        <strain>ATCC 33909 / DSM 639 / JCM 8929 / NBRC 15157 / NCIMB 11770</strain>
    </source>
</reference>
<keyword id="KW-0963">Cytoplasm</keyword>
<keyword id="KW-0489">Methyltransferase</keyword>
<keyword id="KW-1185">Reference proteome</keyword>
<keyword id="KW-0949">S-adenosyl-L-methionine</keyword>
<keyword id="KW-0808">Transferase</keyword>
<keyword id="KW-0819">tRNA processing</keyword>
<proteinExistence type="inferred from homology"/>
<comment type="function">
    <text evidence="1">Specifically catalyzes the AdoMet-dependent 2'-O-ribose methylation of cytidine at position 56 in tRNAs.</text>
</comment>
<comment type="catalytic activity">
    <reaction>
        <text>cytidine(56) in tRNA + S-adenosyl-L-methionine = 2'-O-methylcytidine(56) in tRNA + S-adenosyl-L-homocysteine + H(+)</text>
        <dbReference type="Rhea" id="RHEA:42968"/>
        <dbReference type="Rhea" id="RHEA-COMP:10308"/>
        <dbReference type="Rhea" id="RHEA-COMP:10309"/>
        <dbReference type="ChEBI" id="CHEBI:15378"/>
        <dbReference type="ChEBI" id="CHEBI:57856"/>
        <dbReference type="ChEBI" id="CHEBI:59789"/>
        <dbReference type="ChEBI" id="CHEBI:74495"/>
        <dbReference type="ChEBI" id="CHEBI:82748"/>
        <dbReference type="EC" id="2.1.1.206"/>
    </reaction>
</comment>
<comment type="subunit">
    <text evidence="1">Homodimer.</text>
</comment>
<comment type="subcellular location">
    <subcellularLocation>
        <location evidence="2">Cytoplasm</location>
    </subcellularLocation>
</comment>
<comment type="similarity">
    <text evidence="2">Belongs to the aTrm56 family.</text>
</comment>